<gene>
    <name type="primary">leuA</name>
    <name type="ordered locus">MK0391</name>
</gene>
<sequence length="499" mass="54339">MPDRVRIFDTTLRDGEQTPGVSLTVEEKVEIARKLDEFGVDTIEAGFPVASEGEFEAVRAIAGEELDAEICGLARCVKGDIDAAIDADVDCVHVFIATSDIHLRYKLEMSREEALERAIEGVEYASDHGVTVEFSAEDATRTDRDYLLEVYKATVEAGADRVNVPDTVGVMTPPEMYRLTAEVVDAVDVPVSVHCHNDFGMAVANSLAAVEAGAEQVHVTVNGIGERAGNASLEQVVMALKALYDIELDVRTEMLVELSRLVERLTGVVVPPNTPIVGENAFAHESGIHSHGVIKKAETYEPIRPEDVGHRRRIVLGKHAGRHAIKKKLEEMGIEVTEEQLDEIVRRVKELGDKGKRVTEDDLEAIARDVVGEVPESEAAVKLEEIAVMTGNKFTPTASVRVYLDGEEHEAASTGVGSVDAAIRALREAIEELGMDVELKEYRLEAITGGTDALAEVTVRLEDEDGNVTTARGAAEDIVMASVKAFVRGVNRLARRRRD</sequence>
<reference key="1">
    <citation type="journal article" date="2002" name="Proc. Natl. Acad. Sci. U.S.A.">
        <title>The complete genome of hyperthermophile Methanopyrus kandleri AV19 and monophyly of archaeal methanogens.</title>
        <authorList>
            <person name="Slesarev A.I."/>
            <person name="Mezhevaya K.V."/>
            <person name="Makarova K.S."/>
            <person name="Polushin N.N."/>
            <person name="Shcherbinina O.V."/>
            <person name="Shakhova V.V."/>
            <person name="Belova G.I."/>
            <person name="Aravind L."/>
            <person name="Natale D.A."/>
            <person name="Rogozin I.B."/>
            <person name="Tatusov R.L."/>
            <person name="Wolf Y.I."/>
            <person name="Stetter K.O."/>
            <person name="Malykh A.G."/>
            <person name="Koonin E.V."/>
            <person name="Kozyavkin S.A."/>
        </authorList>
    </citation>
    <scope>NUCLEOTIDE SEQUENCE [LARGE SCALE GENOMIC DNA]</scope>
    <source>
        <strain>AV19 / DSM 6324 / JCM 9639 / NBRC 100938</strain>
    </source>
</reference>
<accession>Q8TYB1</accession>
<proteinExistence type="inferred from homology"/>
<dbReference type="EC" id="2.3.3.13"/>
<dbReference type="EMBL" id="AE009439">
    <property type="protein sequence ID" value="AAM01606.1"/>
    <property type="molecule type" value="Genomic_DNA"/>
</dbReference>
<dbReference type="RefSeq" id="WP_011018761.1">
    <property type="nucleotide sequence ID" value="NC_003551.1"/>
</dbReference>
<dbReference type="SMR" id="Q8TYB1"/>
<dbReference type="FunCoup" id="Q8TYB1">
    <property type="interactions" value="202"/>
</dbReference>
<dbReference type="STRING" id="190192.MK0391"/>
<dbReference type="PaxDb" id="190192-MK0391"/>
<dbReference type="EnsemblBacteria" id="AAM01606">
    <property type="protein sequence ID" value="AAM01606"/>
    <property type="gene ID" value="MK0391"/>
</dbReference>
<dbReference type="GeneID" id="1477694"/>
<dbReference type="KEGG" id="mka:MK0391"/>
<dbReference type="PATRIC" id="fig|190192.8.peg.417"/>
<dbReference type="HOGENOM" id="CLU_022158_0_1_2"/>
<dbReference type="InParanoid" id="Q8TYB1"/>
<dbReference type="OrthoDB" id="6555at2157"/>
<dbReference type="UniPathway" id="UPA00048">
    <property type="reaction ID" value="UER00070"/>
</dbReference>
<dbReference type="Proteomes" id="UP000001826">
    <property type="component" value="Chromosome"/>
</dbReference>
<dbReference type="GO" id="GO:0003852">
    <property type="term" value="F:2-isopropylmalate synthase activity"/>
    <property type="evidence" value="ECO:0007669"/>
    <property type="project" value="UniProtKB-EC"/>
</dbReference>
<dbReference type="GO" id="GO:0046872">
    <property type="term" value="F:metal ion binding"/>
    <property type="evidence" value="ECO:0007669"/>
    <property type="project" value="UniProtKB-KW"/>
</dbReference>
<dbReference type="GO" id="GO:0019298">
    <property type="term" value="P:coenzyme B biosynthetic process"/>
    <property type="evidence" value="ECO:0007669"/>
    <property type="project" value="TreeGrafter"/>
</dbReference>
<dbReference type="GO" id="GO:0009098">
    <property type="term" value="P:L-leucine biosynthetic process"/>
    <property type="evidence" value="ECO:0007669"/>
    <property type="project" value="UniProtKB-UniPathway"/>
</dbReference>
<dbReference type="CDD" id="cd07940">
    <property type="entry name" value="DRE_TIM_IPMS"/>
    <property type="match status" value="1"/>
</dbReference>
<dbReference type="FunFam" id="1.10.238.260:FF:000001">
    <property type="entry name" value="2-isopropylmalate synthase"/>
    <property type="match status" value="1"/>
</dbReference>
<dbReference type="FunFam" id="3.20.20.70:FF:000010">
    <property type="entry name" value="2-isopropylmalate synthase"/>
    <property type="match status" value="1"/>
</dbReference>
<dbReference type="FunFam" id="3.30.160.270:FF:000003">
    <property type="entry name" value="2-isopropylmalate synthase"/>
    <property type="match status" value="1"/>
</dbReference>
<dbReference type="Gene3D" id="1.10.238.260">
    <property type="match status" value="1"/>
</dbReference>
<dbReference type="Gene3D" id="3.30.160.270">
    <property type="match status" value="1"/>
</dbReference>
<dbReference type="Gene3D" id="3.20.20.70">
    <property type="entry name" value="Aldolase class I"/>
    <property type="match status" value="1"/>
</dbReference>
<dbReference type="InterPro" id="IPR050073">
    <property type="entry name" value="2-IPM_HCS-like"/>
</dbReference>
<dbReference type="InterPro" id="IPR013709">
    <property type="entry name" value="2-isopropylmalate_synth_dimer"/>
</dbReference>
<dbReference type="InterPro" id="IPR002034">
    <property type="entry name" value="AIPM/Hcit_synth_CS"/>
</dbReference>
<dbReference type="InterPro" id="IPR013785">
    <property type="entry name" value="Aldolase_TIM"/>
</dbReference>
<dbReference type="InterPro" id="IPR011830">
    <property type="entry name" value="LEU1_arch"/>
</dbReference>
<dbReference type="InterPro" id="IPR054691">
    <property type="entry name" value="LeuA/HCS_post-cat"/>
</dbReference>
<dbReference type="InterPro" id="IPR036230">
    <property type="entry name" value="LeuA_allosteric_dom_sf"/>
</dbReference>
<dbReference type="InterPro" id="IPR000891">
    <property type="entry name" value="PYR_CT"/>
</dbReference>
<dbReference type="NCBIfam" id="TIGR02090">
    <property type="entry name" value="LEU1_arch"/>
    <property type="match status" value="1"/>
</dbReference>
<dbReference type="NCBIfam" id="NF002085">
    <property type="entry name" value="PRK00915.1-2"/>
    <property type="match status" value="1"/>
</dbReference>
<dbReference type="NCBIfam" id="NF002086">
    <property type="entry name" value="PRK00915.1-3"/>
    <property type="match status" value="1"/>
</dbReference>
<dbReference type="PANTHER" id="PTHR10277:SF9">
    <property type="entry name" value="2-ISOPROPYLMALATE SYNTHASE 1, CHLOROPLASTIC-RELATED"/>
    <property type="match status" value="1"/>
</dbReference>
<dbReference type="PANTHER" id="PTHR10277">
    <property type="entry name" value="HOMOCITRATE SYNTHASE-RELATED"/>
    <property type="match status" value="1"/>
</dbReference>
<dbReference type="Pfam" id="PF22617">
    <property type="entry name" value="HCS_D2"/>
    <property type="match status" value="1"/>
</dbReference>
<dbReference type="Pfam" id="PF00682">
    <property type="entry name" value="HMGL-like"/>
    <property type="match status" value="1"/>
</dbReference>
<dbReference type="Pfam" id="PF08502">
    <property type="entry name" value="LeuA_dimer"/>
    <property type="match status" value="1"/>
</dbReference>
<dbReference type="SMART" id="SM00917">
    <property type="entry name" value="LeuA_dimer"/>
    <property type="match status" value="1"/>
</dbReference>
<dbReference type="SUPFAM" id="SSF110921">
    <property type="entry name" value="2-isopropylmalate synthase LeuA, allosteric (dimerisation) domain"/>
    <property type="match status" value="1"/>
</dbReference>
<dbReference type="SUPFAM" id="SSF51569">
    <property type="entry name" value="Aldolase"/>
    <property type="match status" value="1"/>
</dbReference>
<dbReference type="PROSITE" id="PS00815">
    <property type="entry name" value="AIPM_HOMOCIT_SYNTH_1"/>
    <property type="match status" value="1"/>
</dbReference>
<dbReference type="PROSITE" id="PS00816">
    <property type="entry name" value="AIPM_HOMOCIT_SYNTH_2"/>
    <property type="match status" value="1"/>
</dbReference>
<dbReference type="PROSITE" id="PS50991">
    <property type="entry name" value="PYR_CT"/>
    <property type="match status" value="1"/>
</dbReference>
<protein>
    <recommendedName>
        <fullName>Probable 2-isopropylmalate synthase</fullName>
        <ecNumber>2.3.3.13</ecNumber>
    </recommendedName>
    <alternativeName>
        <fullName>Alpha-IPM synthase</fullName>
    </alternativeName>
    <alternativeName>
        <fullName>Alpha-isopropylmalate synthase</fullName>
    </alternativeName>
</protein>
<evidence type="ECO:0000250" key="1"/>
<evidence type="ECO:0000250" key="2">
    <source>
        <dbReference type="UniProtKB" id="Q9JZG1"/>
    </source>
</evidence>
<evidence type="ECO:0000255" key="3">
    <source>
        <dbReference type="PROSITE-ProRule" id="PRU01151"/>
    </source>
</evidence>
<evidence type="ECO:0000305" key="4"/>
<keyword id="KW-0028">Amino-acid biosynthesis</keyword>
<keyword id="KW-0100">Branched-chain amino acid biosynthesis</keyword>
<keyword id="KW-0432">Leucine biosynthesis</keyword>
<keyword id="KW-0479">Metal-binding</keyword>
<keyword id="KW-1185">Reference proteome</keyword>
<keyword id="KW-0808">Transferase</keyword>
<feature type="chain" id="PRO_0000140451" description="Probable 2-isopropylmalate synthase">
    <location>
        <begin position="1"/>
        <end position="499"/>
    </location>
</feature>
<feature type="domain" description="Pyruvate carboxyltransferase" evidence="3">
    <location>
        <begin position="5"/>
        <end position="256"/>
    </location>
</feature>
<feature type="binding site" evidence="2">
    <location>
        <position position="14"/>
    </location>
    <ligand>
        <name>a divalent metal cation</name>
        <dbReference type="ChEBI" id="CHEBI:60240"/>
    </ligand>
</feature>
<feature type="binding site" evidence="2">
    <location>
        <position position="194"/>
    </location>
    <ligand>
        <name>a divalent metal cation</name>
        <dbReference type="ChEBI" id="CHEBI:60240"/>
    </ligand>
</feature>
<feature type="binding site" evidence="2">
    <location>
        <position position="196"/>
    </location>
    <ligand>
        <name>a divalent metal cation</name>
        <dbReference type="ChEBI" id="CHEBI:60240"/>
    </ligand>
</feature>
<feature type="binding site" evidence="2">
    <location>
        <position position="230"/>
    </location>
    <ligand>
        <name>a divalent metal cation</name>
        <dbReference type="ChEBI" id="CHEBI:60240"/>
    </ligand>
</feature>
<name>LEU1_METKA</name>
<comment type="function">
    <text evidence="1">Catalyzes the condensation of the acetyl group of acetyl-CoA with 3-methyl-2-oxobutanoate (2-oxoisovalerate) to form 3-carboxy-3-hydroxy-4-methylpentanoate (2-isopropylmalate).</text>
</comment>
<comment type="catalytic activity">
    <reaction>
        <text>3-methyl-2-oxobutanoate + acetyl-CoA + H2O = (2S)-2-isopropylmalate + CoA + H(+)</text>
        <dbReference type="Rhea" id="RHEA:21524"/>
        <dbReference type="ChEBI" id="CHEBI:1178"/>
        <dbReference type="ChEBI" id="CHEBI:11851"/>
        <dbReference type="ChEBI" id="CHEBI:15377"/>
        <dbReference type="ChEBI" id="CHEBI:15378"/>
        <dbReference type="ChEBI" id="CHEBI:57287"/>
        <dbReference type="ChEBI" id="CHEBI:57288"/>
        <dbReference type="EC" id="2.3.3.13"/>
    </reaction>
</comment>
<comment type="cofactor">
    <cofactor evidence="2">
        <name>a divalent metal cation</name>
        <dbReference type="ChEBI" id="CHEBI:60240"/>
    </cofactor>
</comment>
<comment type="pathway">
    <text>Amino-acid biosynthesis; L-leucine biosynthesis; L-leucine from 3-methyl-2-oxobutanoate: step 1/4.</text>
</comment>
<comment type="subunit">
    <text evidence="2">Homodimer.</text>
</comment>
<comment type="similarity">
    <text evidence="4">Belongs to the alpha-IPM synthase/homocitrate synthase family.</text>
</comment>
<organism>
    <name type="scientific">Methanopyrus kandleri (strain AV19 / DSM 6324 / JCM 9639 / NBRC 100938)</name>
    <dbReference type="NCBI Taxonomy" id="190192"/>
    <lineage>
        <taxon>Archaea</taxon>
        <taxon>Methanobacteriati</taxon>
        <taxon>Methanobacteriota</taxon>
        <taxon>Methanomada group</taxon>
        <taxon>Methanopyri</taxon>
        <taxon>Methanopyrales</taxon>
        <taxon>Methanopyraceae</taxon>
        <taxon>Methanopyrus</taxon>
    </lineage>
</organism>